<sequence length="374" mass="44081">MSNVQSQSNSHHPVHNIVNRSPTSRSEQQIRSIPPTNNNNNNNNNSINNINNNTQRQPLNNNNNNNNNINRNNSNLYPSYADQPDILRSSQKDEYYKKLFEDQCFEMLTRITGPRFIMNRQSESKLLANTIYYLLTTMIGSQTLGEEYCNLRKIKDKTFSIPSIPDRIKLYFFHLLAPYLIKKSLPKLFQRHPKLYILKEIFPKFERLHLALFYFNGSYFEFSKRLSDIRYIFNRKIDQKRPKYDILGLLIIIQILLSTFMYLKENSFFLKQQQKDGGCNGDGEEDNQDLNKDIKIEQVDSVINNNNQDQNNNQEEEEEQKCTLCLEVRTHTTATICGHLFCWHCITEWCNNKEQCPVCRCPISIRTCVPLYNY</sequence>
<protein>
    <recommendedName>
        <fullName evidence="8">Peroxisome biogenesis factor 10</fullName>
        <ecNumber evidence="3">2.3.2.27</ecNumber>
    </recommendedName>
    <alternativeName>
        <fullName evidence="8">Peroxin-10</fullName>
    </alternativeName>
    <alternativeName>
        <fullName>Peroxisomal biogenesis factor 10</fullName>
    </alternativeName>
    <alternativeName>
        <fullName>Peroxisome assembly protein 10</fullName>
    </alternativeName>
</protein>
<proteinExistence type="inferred from homology"/>
<accession>Q54S31</accession>
<reference key="1">
    <citation type="journal article" date="2005" name="Nature">
        <title>The genome of the social amoeba Dictyostelium discoideum.</title>
        <authorList>
            <person name="Eichinger L."/>
            <person name="Pachebat J.A."/>
            <person name="Gloeckner G."/>
            <person name="Rajandream M.A."/>
            <person name="Sucgang R."/>
            <person name="Berriman M."/>
            <person name="Song J."/>
            <person name="Olsen R."/>
            <person name="Szafranski K."/>
            <person name="Xu Q."/>
            <person name="Tunggal B."/>
            <person name="Kummerfeld S."/>
            <person name="Madera M."/>
            <person name="Konfortov B.A."/>
            <person name="Rivero F."/>
            <person name="Bankier A.T."/>
            <person name="Lehmann R."/>
            <person name="Hamlin N."/>
            <person name="Davies R."/>
            <person name="Gaudet P."/>
            <person name="Fey P."/>
            <person name="Pilcher K."/>
            <person name="Chen G."/>
            <person name="Saunders D."/>
            <person name="Sodergren E.J."/>
            <person name="Davis P."/>
            <person name="Kerhornou A."/>
            <person name="Nie X."/>
            <person name="Hall N."/>
            <person name="Anjard C."/>
            <person name="Hemphill L."/>
            <person name="Bason N."/>
            <person name="Farbrother P."/>
            <person name="Desany B."/>
            <person name="Just E."/>
            <person name="Morio T."/>
            <person name="Rost R."/>
            <person name="Churcher C.M."/>
            <person name="Cooper J."/>
            <person name="Haydock S."/>
            <person name="van Driessche N."/>
            <person name="Cronin A."/>
            <person name="Goodhead I."/>
            <person name="Muzny D.M."/>
            <person name="Mourier T."/>
            <person name="Pain A."/>
            <person name="Lu M."/>
            <person name="Harper D."/>
            <person name="Lindsay R."/>
            <person name="Hauser H."/>
            <person name="James K.D."/>
            <person name="Quiles M."/>
            <person name="Madan Babu M."/>
            <person name="Saito T."/>
            <person name="Buchrieser C."/>
            <person name="Wardroper A."/>
            <person name="Felder M."/>
            <person name="Thangavelu M."/>
            <person name="Johnson D."/>
            <person name="Knights A."/>
            <person name="Loulseged H."/>
            <person name="Mungall K.L."/>
            <person name="Oliver K."/>
            <person name="Price C."/>
            <person name="Quail M.A."/>
            <person name="Urushihara H."/>
            <person name="Hernandez J."/>
            <person name="Rabbinowitsch E."/>
            <person name="Steffen D."/>
            <person name="Sanders M."/>
            <person name="Ma J."/>
            <person name="Kohara Y."/>
            <person name="Sharp S."/>
            <person name="Simmonds M.N."/>
            <person name="Spiegler S."/>
            <person name="Tivey A."/>
            <person name="Sugano S."/>
            <person name="White B."/>
            <person name="Walker D."/>
            <person name="Woodward J.R."/>
            <person name="Winckler T."/>
            <person name="Tanaka Y."/>
            <person name="Shaulsky G."/>
            <person name="Schleicher M."/>
            <person name="Weinstock G.M."/>
            <person name="Rosenthal A."/>
            <person name="Cox E.C."/>
            <person name="Chisholm R.L."/>
            <person name="Gibbs R.A."/>
            <person name="Loomis W.F."/>
            <person name="Platzer M."/>
            <person name="Kay R.R."/>
            <person name="Williams J.G."/>
            <person name="Dear P.H."/>
            <person name="Noegel A.A."/>
            <person name="Barrell B.G."/>
            <person name="Kuspa A."/>
        </authorList>
    </citation>
    <scope>NUCLEOTIDE SEQUENCE [LARGE SCALE GENOMIC DNA]</scope>
    <source>
        <strain>AX4</strain>
    </source>
</reference>
<dbReference type="EC" id="2.3.2.27" evidence="3"/>
<dbReference type="EMBL" id="AAFI02000047">
    <property type="protein sequence ID" value="EAL66206.2"/>
    <property type="molecule type" value="Genomic_DNA"/>
</dbReference>
<dbReference type="RefSeq" id="XP_640208.2">
    <property type="nucleotide sequence ID" value="XM_635116.2"/>
</dbReference>
<dbReference type="SMR" id="Q54S31"/>
<dbReference type="FunCoup" id="Q54S31">
    <property type="interactions" value="411"/>
</dbReference>
<dbReference type="STRING" id="44689.Q54S31"/>
<dbReference type="PaxDb" id="44689-DDB0238052"/>
<dbReference type="EnsemblProtists" id="EAL66206">
    <property type="protein sequence ID" value="EAL66206"/>
    <property type="gene ID" value="DDB_G0282693"/>
</dbReference>
<dbReference type="GeneID" id="8623748"/>
<dbReference type="KEGG" id="ddi:DDB_G0282693"/>
<dbReference type="dictyBase" id="DDB_G0282693">
    <property type="gene designation" value="pex10"/>
</dbReference>
<dbReference type="VEuPathDB" id="AmoebaDB:DDB_G0282693"/>
<dbReference type="eggNOG" id="KOG0317">
    <property type="taxonomic scope" value="Eukaryota"/>
</dbReference>
<dbReference type="HOGENOM" id="CLU_041707_2_0_1"/>
<dbReference type="InParanoid" id="Q54S31"/>
<dbReference type="OMA" id="REKSECP"/>
<dbReference type="PhylomeDB" id="Q54S31"/>
<dbReference type="Reactome" id="R-DDI-8866654">
    <property type="pathway name" value="E3 ubiquitin ligases ubiquitinate target proteins"/>
</dbReference>
<dbReference type="Reactome" id="R-DDI-9033241">
    <property type="pathway name" value="Peroxisomal protein import"/>
</dbReference>
<dbReference type="UniPathway" id="UPA00143"/>
<dbReference type="PRO" id="PR:Q54S31"/>
<dbReference type="Proteomes" id="UP000002195">
    <property type="component" value="Chromosome 3"/>
</dbReference>
<dbReference type="GO" id="GO:0005778">
    <property type="term" value="C:peroxisomal membrane"/>
    <property type="evidence" value="ECO:0000250"/>
    <property type="project" value="dictyBase"/>
</dbReference>
<dbReference type="GO" id="GO:0061630">
    <property type="term" value="F:ubiquitin protein ligase activity"/>
    <property type="evidence" value="ECO:0000250"/>
    <property type="project" value="dictyBase"/>
</dbReference>
<dbReference type="GO" id="GO:0008270">
    <property type="term" value="F:zinc ion binding"/>
    <property type="evidence" value="ECO:0007669"/>
    <property type="project" value="UniProtKB-KW"/>
</dbReference>
<dbReference type="GO" id="GO:0007031">
    <property type="term" value="P:peroxisome organization"/>
    <property type="evidence" value="ECO:0000250"/>
    <property type="project" value="dictyBase"/>
</dbReference>
<dbReference type="GO" id="GO:0016558">
    <property type="term" value="P:protein import into peroxisome matrix"/>
    <property type="evidence" value="ECO:0000318"/>
    <property type="project" value="GO_Central"/>
</dbReference>
<dbReference type="GO" id="GO:0016567">
    <property type="term" value="P:protein ubiquitination"/>
    <property type="evidence" value="ECO:0007669"/>
    <property type="project" value="UniProtKB-UniPathway"/>
</dbReference>
<dbReference type="CDD" id="cd16527">
    <property type="entry name" value="RING-HC_PEX10"/>
    <property type="match status" value="1"/>
</dbReference>
<dbReference type="FunFam" id="3.30.40.10:FF:000332">
    <property type="entry name" value="Peroxisome biogenesis factor 10"/>
    <property type="match status" value="1"/>
</dbReference>
<dbReference type="Gene3D" id="3.30.40.10">
    <property type="entry name" value="Zinc/RING finger domain, C3HC4 (zinc finger)"/>
    <property type="match status" value="1"/>
</dbReference>
<dbReference type="InterPro" id="IPR025654">
    <property type="entry name" value="PEX2/10"/>
</dbReference>
<dbReference type="InterPro" id="IPR006845">
    <property type="entry name" value="Pex_N"/>
</dbReference>
<dbReference type="InterPro" id="IPR001841">
    <property type="entry name" value="Znf_RING"/>
</dbReference>
<dbReference type="InterPro" id="IPR013083">
    <property type="entry name" value="Znf_RING/FYVE/PHD"/>
</dbReference>
<dbReference type="InterPro" id="IPR017907">
    <property type="entry name" value="Znf_RING_CS"/>
</dbReference>
<dbReference type="PANTHER" id="PTHR23350">
    <property type="entry name" value="PEROXISOME ASSEMBLY PROTEIN 10"/>
    <property type="match status" value="1"/>
</dbReference>
<dbReference type="PANTHER" id="PTHR23350:SF0">
    <property type="entry name" value="PEROXISOME BIOGENESIS FACTOR 10"/>
    <property type="match status" value="1"/>
</dbReference>
<dbReference type="Pfam" id="PF04757">
    <property type="entry name" value="Pex2_Pex12"/>
    <property type="match status" value="1"/>
</dbReference>
<dbReference type="Pfam" id="PF13639">
    <property type="entry name" value="zf-RING_2"/>
    <property type="match status" value="1"/>
</dbReference>
<dbReference type="SMART" id="SM00184">
    <property type="entry name" value="RING"/>
    <property type="match status" value="1"/>
</dbReference>
<dbReference type="SUPFAM" id="SSF57850">
    <property type="entry name" value="RING/U-box"/>
    <property type="match status" value="1"/>
</dbReference>
<dbReference type="PROSITE" id="PS00518">
    <property type="entry name" value="ZF_RING_1"/>
    <property type="match status" value="1"/>
</dbReference>
<dbReference type="PROSITE" id="PS50089">
    <property type="entry name" value="ZF_RING_2"/>
    <property type="match status" value="1"/>
</dbReference>
<organism>
    <name type="scientific">Dictyostelium discoideum</name>
    <name type="common">Social amoeba</name>
    <dbReference type="NCBI Taxonomy" id="44689"/>
    <lineage>
        <taxon>Eukaryota</taxon>
        <taxon>Amoebozoa</taxon>
        <taxon>Evosea</taxon>
        <taxon>Eumycetozoa</taxon>
        <taxon>Dictyostelia</taxon>
        <taxon>Dictyosteliales</taxon>
        <taxon>Dictyosteliaceae</taxon>
        <taxon>Dictyostelium</taxon>
    </lineage>
</organism>
<comment type="function">
    <text evidence="3 4">E3 ubiquitin-protein ligase component of a retrotranslocation channel required for peroxisome organization by mediating export of the PEX5 receptor from peroxisomes to the cytosol, thereby promoting PEX5 recycling (By similarity). The retrotranslocation channel is composed of PEX2, PEX10 and PEX12; each subunit contributing transmembrane segments that coassemble into an open channel that specifically allows the passage of PEX5 through the peroxisomal membrane (By similarity). PEX10 also regulates PEX5 recycling by acting as a E3 ubiquitin-protein ligase (By similarity). When PEX5 recycling is compromised, PEX10 catalyzes polyubiquitination of PEX5 during its passage through the retrotranslocation channel, leading to its degradation (By similarity).</text>
</comment>
<comment type="catalytic activity">
    <reaction evidence="3">
        <text>S-ubiquitinyl-[E2 ubiquitin-conjugating enzyme]-L-cysteine + [acceptor protein]-L-lysine = [E2 ubiquitin-conjugating enzyme]-L-cysteine + N(6)-ubiquitinyl-[acceptor protein]-L-lysine.</text>
        <dbReference type="EC" id="2.3.2.27"/>
    </reaction>
</comment>
<comment type="activity regulation">
    <text evidence="3">The E3 ubiquitin-protein ligase activity is stimulated by PEX12.</text>
</comment>
<comment type="pathway">
    <text evidence="3">Protein modification; protein ubiquitination.</text>
</comment>
<comment type="subunit">
    <text evidence="3">Component of the PEX2-PEX10-PEX12 retrotranslocation channel.</text>
</comment>
<comment type="subcellular location">
    <subcellularLocation>
        <location evidence="3">Peroxisome membrane</location>
        <topology evidence="5">Multi-pass membrane protein</topology>
    </subcellularLocation>
</comment>
<comment type="domain">
    <text evidence="1">The three subunits of the retrotranslocation channel (PEX2, PEX10 and PEX12) coassemble in the membrane into a channel with an open 10 Angstrom pore. The RING-type zinc-fingers that catalyze PEX5 receptor ubiquitination are positioned above the pore on the cytosolic side of the complex.</text>
</comment>
<comment type="similarity">
    <text evidence="8">Belongs to the pex2/pex10/pex12 family.</text>
</comment>
<feature type="chain" id="PRO_0000346863" description="Peroxisome biogenesis factor 10">
    <location>
        <begin position="1"/>
        <end position="374"/>
    </location>
</feature>
<feature type="topological domain" description="Peroxisomal matrix" evidence="1">
    <location>
        <begin position="1"/>
        <end position="82"/>
    </location>
</feature>
<feature type="transmembrane region" description="Helical; Name=TM1" evidence="1">
    <location>
        <begin position="83"/>
        <end position="112"/>
    </location>
</feature>
<feature type="topological domain" description="Cytoplasmic" evidence="1">
    <location>
        <position position="113"/>
    </location>
</feature>
<feature type="transmembrane region" description="Helical; Name=TM2" evidence="1">
    <location>
        <begin position="114"/>
        <end position="135"/>
    </location>
</feature>
<feature type="topological domain" description="Peroxisomal matrix" evidence="1">
    <location>
        <begin position="136"/>
        <end position="165"/>
    </location>
</feature>
<feature type="transmembrane region" description="Helical; Name=TM3" evidence="2">
    <location>
        <begin position="166"/>
        <end position="181"/>
    </location>
</feature>
<feature type="topological domain" description="Cytoplasmic" evidence="1">
    <location>
        <begin position="182"/>
        <end position="192"/>
    </location>
</feature>
<feature type="transmembrane region" description="Helical; Name=TM4" evidence="2">
    <location>
        <begin position="193"/>
        <end position="216"/>
    </location>
</feature>
<feature type="topological domain" description="Peroxisomal matrix" evidence="1">
    <location>
        <begin position="217"/>
        <end position="243"/>
    </location>
</feature>
<feature type="transmembrane region" description="Helical; Name=TM5" evidence="1">
    <location>
        <begin position="244"/>
        <end position="263"/>
    </location>
</feature>
<feature type="topological domain" description="Cytoplasmic" evidence="1">
    <location>
        <begin position="264"/>
        <end position="374"/>
    </location>
</feature>
<feature type="zinc finger region" description="RING-type" evidence="6">
    <location>
        <begin position="322"/>
        <end position="360"/>
    </location>
</feature>
<feature type="region of interest" description="Disordered" evidence="7">
    <location>
        <begin position="1"/>
        <end position="82"/>
    </location>
</feature>
<feature type="compositionally biased region" description="Polar residues" evidence="7">
    <location>
        <begin position="1"/>
        <end position="11"/>
    </location>
</feature>
<feature type="compositionally biased region" description="Polar residues" evidence="7">
    <location>
        <begin position="18"/>
        <end position="31"/>
    </location>
</feature>
<feature type="compositionally biased region" description="Low complexity" evidence="7">
    <location>
        <begin position="35"/>
        <end position="76"/>
    </location>
</feature>
<feature type="binding site" evidence="1">
    <location>
        <position position="322"/>
    </location>
    <ligand>
        <name>Zn(2+)</name>
        <dbReference type="ChEBI" id="CHEBI:29105"/>
        <label>1</label>
    </ligand>
</feature>
<feature type="binding site" evidence="1">
    <location>
        <position position="325"/>
    </location>
    <ligand>
        <name>Zn(2+)</name>
        <dbReference type="ChEBI" id="CHEBI:29105"/>
        <label>1</label>
    </ligand>
</feature>
<feature type="binding site" evidence="1">
    <location>
        <position position="337"/>
    </location>
    <ligand>
        <name>Zn(2+)</name>
        <dbReference type="ChEBI" id="CHEBI:29105"/>
        <label>2</label>
    </ligand>
</feature>
<feature type="binding site" evidence="1">
    <location>
        <position position="339"/>
    </location>
    <ligand>
        <name>Zn(2+)</name>
        <dbReference type="ChEBI" id="CHEBI:29105"/>
        <label>2</label>
    </ligand>
</feature>
<feature type="binding site" evidence="1">
    <location>
        <position position="342"/>
    </location>
    <ligand>
        <name>Zn(2+)</name>
        <dbReference type="ChEBI" id="CHEBI:29105"/>
        <label>1</label>
    </ligand>
</feature>
<feature type="binding site" evidence="1">
    <location>
        <position position="345"/>
    </location>
    <ligand>
        <name>Zn(2+)</name>
        <dbReference type="ChEBI" id="CHEBI:29105"/>
        <label>1</label>
    </ligand>
</feature>
<feature type="binding site" evidence="1">
    <location>
        <position position="356"/>
    </location>
    <ligand>
        <name>Zn(2+)</name>
        <dbReference type="ChEBI" id="CHEBI:29105"/>
        <label>2</label>
    </ligand>
</feature>
<feature type="binding site" evidence="1">
    <location>
        <position position="359"/>
    </location>
    <ligand>
        <name>Zn(2+)</name>
        <dbReference type="ChEBI" id="CHEBI:29105"/>
        <label>2</label>
    </ligand>
</feature>
<evidence type="ECO:0000250" key="1">
    <source>
        <dbReference type="UniProtKB" id="G2Q0E2"/>
    </source>
</evidence>
<evidence type="ECO:0000250" key="2">
    <source>
        <dbReference type="UniProtKB" id="G2Q1C9"/>
    </source>
</evidence>
<evidence type="ECO:0000250" key="3">
    <source>
        <dbReference type="UniProtKB" id="O60683"/>
    </source>
</evidence>
<evidence type="ECO:0000250" key="4">
    <source>
        <dbReference type="UniProtKB" id="Q05568"/>
    </source>
</evidence>
<evidence type="ECO:0000255" key="5"/>
<evidence type="ECO:0000255" key="6">
    <source>
        <dbReference type="PROSITE-ProRule" id="PRU00175"/>
    </source>
</evidence>
<evidence type="ECO:0000256" key="7">
    <source>
        <dbReference type="SAM" id="MobiDB-lite"/>
    </source>
</evidence>
<evidence type="ECO:0000305" key="8"/>
<name>PEX10_DICDI</name>
<keyword id="KW-0472">Membrane</keyword>
<keyword id="KW-0479">Metal-binding</keyword>
<keyword id="KW-0576">Peroxisome</keyword>
<keyword id="KW-0962">Peroxisome biogenesis</keyword>
<keyword id="KW-0653">Protein transport</keyword>
<keyword id="KW-1185">Reference proteome</keyword>
<keyword id="KW-0808">Transferase</keyword>
<keyword id="KW-0812">Transmembrane</keyword>
<keyword id="KW-1133">Transmembrane helix</keyword>
<keyword id="KW-0813">Transport</keyword>
<keyword id="KW-0833">Ubl conjugation pathway</keyword>
<keyword id="KW-0862">Zinc</keyword>
<keyword id="KW-0863">Zinc-finger</keyword>
<gene>
    <name type="primary">pex10</name>
    <name type="ORF">DDB_G0282693</name>
</gene>